<reference key="1">
    <citation type="journal article" date="2009" name="Appl. Environ. Microbiol.">
        <title>Complete genome sequence of the chemolithoautotrophic marine magnetotactic coccus strain MC-1.</title>
        <authorList>
            <person name="Schubbe S."/>
            <person name="Williams T.J."/>
            <person name="Xie G."/>
            <person name="Kiss H.E."/>
            <person name="Brettin T.S."/>
            <person name="Martinez D."/>
            <person name="Ross C.A."/>
            <person name="Schuler D."/>
            <person name="Cox B.L."/>
            <person name="Nealson K.H."/>
            <person name="Bazylinski D.A."/>
        </authorList>
    </citation>
    <scope>NUCLEOTIDE SEQUENCE [LARGE SCALE GENOMIC DNA]</scope>
    <source>
        <strain>ATCC BAA-1437 / JCM 17883 / MC-1</strain>
    </source>
</reference>
<dbReference type="EMBL" id="CP000471">
    <property type="protein sequence ID" value="ABK45838.1"/>
    <property type="molecule type" value="Genomic_DNA"/>
</dbReference>
<dbReference type="RefSeq" id="WP_011714897.1">
    <property type="nucleotide sequence ID" value="NC_008576.1"/>
</dbReference>
<dbReference type="SMR" id="A0LCZ5"/>
<dbReference type="STRING" id="156889.Mmc1_3352"/>
<dbReference type="KEGG" id="mgm:Mmc1_3352"/>
<dbReference type="eggNOG" id="COG0261">
    <property type="taxonomic scope" value="Bacteria"/>
</dbReference>
<dbReference type="HOGENOM" id="CLU_061463_3_2_5"/>
<dbReference type="OrthoDB" id="9813334at2"/>
<dbReference type="Proteomes" id="UP000002586">
    <property type="component" value="Chromosome"/>
</dbReference>
<dbReference type="GO" id="GO:0005737">
    <property type="term" value="C:cytoplasm"/>
    <property type="evidence" value="ECO:0007669"/>
    <property type="project" value="UniProtKB-ARBA"/>
</dbReference>
<dbReference type="GO" id="GO:1990904">
    <property type="term" value="C:ribonucleoprotein complex"/>
    <property type="evidence" value="ECO:0007669"/>
    <property type="project" value="UniProtKB-KW"/>
</dbReference>
<dbReference type="GO" id="GO:0005840">
    <property type="term" value="C:ribosome"/>
    <property type="evidence" value="ECO:0007669"/>
    <property type="project" value="UniProtKB-KW"/>
</dbReference>
<dbReference type="GO" id="GO:0019843">
    <property type="term" value="F:rRNA binding"/>
    <property type="evidence" value="ECO:0007669"/>
    <property type="project" value="UniProtKB-UniRule"/>
</dbReference>
<dbReference type="GO" id="GO:0003735">
    <property type="term" value="F:structural constituent of ribosome"/>
    <property type="evidence" value="ECO:0007669"/>
    <property type="project" value="InterPro"/>
</dbReference>
<dbReference type="GO" id="GO:0006412">
    <property type="term" value="P:translation"/>
    <property type="evidence" value="ECO:0007669"/>
    <property type="project" value="UniProtKB-UniRule"/>
</dbReference>
<dbReference type="HAMAP" id="MF_01363">
    <property type="entry name" value="Ribosomal_bL21"/>
    <property type="match status" value="1"/>
</dbReference>
<dbReference type="InterPro" id="IPR028909">
    <property type="entry name" value="bL21-like"/>
</dbReference>
<dbReference type="InterPro" id="IPR036164">
    <property type="entry name" value="bL21-like_sf"/>
</dbReference>
<dbReference type="InterPro" id="IPR001787">
    <property type="entry name" value="Ribosomal_bL21"/>
</dbReference>
<dbReference type="InterPro" id="IPR018258">
    <property type="entry name" value="Ribosomal_bL21_CS"/>
</dbReference>
<dbReference type="NCBIfam" id="TIGR00061">
    <property type="entry name" value="L21"/>
    <property type="match status" value="1"/>
</dbReference>
<dbReference type="PANTHER" id="PTHR21349">
    <property type="entry name" value="50S RIBOSOMAL PROTEIN L21"/>
    <property type="match status" value="1"/>
</dbReference>
<dbReference type="PANTHER" id="PTHR21349:SF0">
    <property type="entry name" value="LARGE RIBOSOMAL SUBUNIT PROTEIN BL21M"/>
    <property type="match status" value="1"/>
</dbReference>
<dbReference type="Pfam" id="PF00829">
    <property type="entry name" value="Ribosomal_L21p"/>
    <property type="match status" value="1"/>
</dbReference>
<dbReference type="SUPFAM" id="SSF141091">
    <property type="entry name" value="L21p-like"/>
    <property type="match status" value="1"/>
</dbReference>
<dbReference type="PROSITE" id="PS01169">
    <property type="entry name" value="RIBOSOMAL_L21"/>
    <property type="match status" value="1"/>
</dbReference>
<sequence>MYAVIRTGGKQYKVSQGDVLRVETVAGDAGGEVIFDDVLMVGGDEGLKVGEATEGAKVTGTIIRQMRDKKVIVFKKKRRKNYIRTQGHRQNLTVVRISGIS</sequence>
<proteinExistence type="inferred from homology"/>
<keyword id="KW-1185">Reference proteome</keyword>
<keyword id="KW-0687">Ribonucleoprotein</keyword>
<keyword id="KW-0689">Ribosomal protein</keyword>
<keyword id="KW-0694">RNA-binding</keyword>
<keyword id="KW-0699">rRNA-binding</keyword>
<evidence type="ECO:0000255" key="1">
    <source>
        <dbReference type="HAMAP-Rule" id="MF_01363"/>
    </source>
</evidence>
<evidence type="ECO:0000305" key="2"/>
<protein>
    <recommendedName>
        <fullName evidence="1">Large ribosomal subunit protein bL21</fullName>
    </recommendedName>
    <alternativeName>
        <fullName evidence="2">50S ribosomal protein L21</fullName>
    </alternativeName>
</protein>
<gene>
    <name evidence="1" type="primary">rplU</name>
    <name type="ordered locus">Mmc1_3352</name>
</gene>
<comment type="function">
    <text evidence="1">This protein binds to 23S rRNA in the presence of protein L20.</text>
</comment>
<comment type="subunit">
    <text evidence="1">Part of the 50S ribosomal subunit. Contacts protein L20.</text>
</comment>
<comment type="similarity">
    <text evidence="1">Belongs to the bacterial ribosomal protein bL21 family.</text>
</comment>
<name>RL21_MAGMM</name>
<feature type="chain" id="PRO_1000067853" description="Large ribosomal subunit protein bL21">
    <location>
        <begin position="1"/>
        <end position="101"/>
    </location>
</feature>
<organism>
    <name type="scientific">Magnetococcus marinus (strain ATCC BAA-1437 / JCM 17883 / MC-1)</name>
    <dbReference type="NCBI Taxonomy" id="156889"/>
    <lineage>
        <taxon>Bacteria</taxon>
        <taxon>Pseudomonadati</taxon>
        <taxon>Pseudomonadota</taxon>
        <taxon>Alphaproteobacteria</taxon>
        <taxon>Magnetococcales</taxon>
        <taxon>Magnetococcaceae</taxon>
        <taxon>Magnetococcus</taxon>
    </lineage>
</organism>
<accession>A0LCZ5</accession>